<dbReference type="EMBL" id="AP006627">
    <property type="protein sequence ID" value="BAD66381.1"/>
    <property type="molecule type" value="Genomic_DNA"/>
</dbReference>
<dbReference type="RefSeq" id="WP_011248684.1">
    <property type="nucleotide sequence ID" value="NC_006582.1"/>
</dbReference>
<dbReference type="SMR" id="Q5WB79"/>
<dbReference type="STRING" id="66692.ABC3850"/>
<dbReference type="KEGG" id="bcl:ABC3850"/>
<dbReference type="eggNOG" id="COG0355">
    <property type="taxonomic scope" value="Bacteria"/>
</dbReference>
<dbReference type="HOGENOM" id="CLU_084338_1_3_9"/>
<dbReference type="OrthoDB" id="9804110at2"/>
<dbReference type="Proteomes" id="UP000001168">
    <property type="component" value="Chromosome"/>
</dbReference>
<dbReference type="GO" id="GO:0005886">
    <property type="term" value="C:plasma membrane"/>
    <property type="evidence" value="ECO:0007669"/>
    <property type="project" value="UniProtKB-SubCell"/>
</dbReference>
<dbReference type="GO" id="GO:0045259">
    <property type="term" value="C:proton-transporting ATP synthase complex"/>
    <property type="evidence" value="ECO:0007669"/>
    <property type="project" value="UniProtKB-KW"/>
</dbReference>
<dbReference type="GO" id="GO:0005524">
    <property type="term" value="F:ATP binding"/>
    <property type="evidence" value="ECO:0007669"/>
    <property type="project" value="UniProtKB-UniRule"/>
</dbReference>
<dbReference type="GO" id="GO:0046933">
    <property type="term" value="F:proton-transporting ATP synthase activity, rotational mechanism"/>
    <property type="evidence" value="ECO:0007669"/>
    <property type="project" value="UniProtKB-UniRule"/>
</dbReference>
<dbReference type="CDD" id="cd12152">
    <property type="entry name" value="F1-ATPase_delta"/>
    <property type="match status" value="1"/>
</dbReference>
<dbReference type="Gene3D" id="1.20.5.440">
    <property type="entry name" value="ATP synthase delta/epsilon subunit, C-terminal domain"/>
    <property type="match status" value="1"/>
</dbReference>
<dbReference type="Gene3D" id="2.60.15.10">
    <property type="entry name" value="F0F1 ATP synthase delta/epsilon subunit, N-terminal"/>
    <property type="match status" value="1"/>
</dbReference>
<dbReference type="HAMAP" id="MF_00530">
    <property type="entry name" value="ATP_synth_epsil_bac"/>
    <property type="match status" value="1"/>
</dbReference>
<dbReference type="InterPro" id="IPR036794">
    <property type="entry name" value="ATP_F1_dsu/esu_C_sf"/>
</dbReference>
<dbReference type="InterPro" id="IPR001469">
    <property type="entry name" value="ATP_synth_F1_dsu/esu"/>
</dbReference>
<dbReference type="InterPro" id="IPR020546">
    <property type="entry name" value="ATP_synth_F1_dsu/esu_N"/>
</dbReference>
<dbReference type="InterPro" id="IPR020547">
    <property type="entry name" value="ATP_synth_F1_esu_C"/>
</dbReference>
<dbReference type="InterPro" id="IPR036771">
    <property type="entry name" value="ATPsynth_dsu/esu_N"/>
</dbReference>
<dbReference type="NCBIfam" id="TIGR01216">
    <property type="entry name" value="ATP_synt_epsi"/>
    <property type="match status" value="1"/>
</dbReference>
<dbReference type="NCBIfam" id="NF001846">
    <property type="entry name" value="PRK00571.1-3"/>
    <property type="match status" value="1"/>
</dbReference>
<dbReference type="NCBIfam" id="NF009980">
    <property type="entry name" value="PRK13446.1"/>
    <property type="match status" value="1"/>
</dbReference>
<dbReference type="PANTHER" id="PTHR13822">
    <property type="entry name" value="ATP SYNTHASE DELTA/EPSILON CHAIN"/>
    <property type="match status" value="1"/>
</dbReference>
<dbReference type="PANTHER" id="PTHR13822:SF10">
    <property type="entry name" value="ATP SYNTHASE EPSILON CHAIN, CHLOROPLASTIC"/>
    <property type="match status" value="1"/>
</dbReference>
<dbReference type="Pfam" id="PF00401">
    <property type="entry name" value="ATP-synt_DE"/>
    <property type="match status" value="1"/>
</dbReference>
<dbReference type="Pfam" id="PF02823">
    <property type="entry name" value="ATP-synt_DE_N"/>
    <property type="match status" value="1"/>
</dbReference>
<dbReference type="SUPFAM" id="SSF46604">
    <property type="entry name" value="Epsilon subunit of F1F0-ATP synthase C-terminal domain"/>
    <property type="match status" value="1"/>
</dbReference>
<dbReference type="SUPFAM" id="SSF51344">
    <property type="entry name" value="Epsilon subunit of F1F0-ATP synthase N-terminal domain"/>
    <property type="match status" value="1"/>
</dbReference>
<gene>
    <name evidence="1" type="primary">atpC</name>
    <name type="ordered locus">ABC3850</name>
</gene>
<keyword id="KW-0066">ATP synthesis</keyword>
<keyword id="KW-1003">Cell membrane</keyword>
<keyword id="KW-0139">CF(1)</keyword>
<keyword id="KW-0375">Hydrogen ion transport</keyword>
<keyword id="KW-0406">Ion transport</keyword>
<keyword id="KW-0472">Membrane</keyword>
<keyword id="KW-1185">Reference proteome</keyword>
<keyword id="KW-0813">Transport</keyword>
<comment type="function">
    <text evidence="1">Produces ATP from ADP in the presence of a proton gradient across the membrane.</text>
</comment>
<comment type="subunit">
    <text>F-type ATPases have 2 components, CF(1) - the catalytic core - and CF(0) - the membrane proton channel. CF(1) has five subunits: alpha(3), beta(3), gamma(1), delta(1), epsilon(1). CF(0) has three main subunits: a, b and c.</text>
</comment>
<comment type="subcellular location">
    <subcellularLocation>
        <location evidence="1">Cell membrane</location>
        <topology evidence="1">Peripheral membrane protein</topology>
    </subcellularLocation>
</comment>
<comment type="similarity">
    <text evidence="1">Belongs to the ATPase epsilon chain family.</text>
</comment>
<organism>
    <name type="scientific">Shouchella clausii (strain KSM-K16)</name>
    <name type="common">Alkalihalobacillus clausii</name>
    <dbReference type="NCBI Taxonomy" id="66692"/>
    <lineage>
        <taxon>Bacteria</taxon>
        <taxon>Bacillati</taxon>
        <taxon>Bacillota</taxon>
        <taxon>Bacilli</taxon>
        <taxon>Bacillales</taxon>
        <taxon>Bacillaceae</taxon>
        <taxon>Shouchella</taxon>
    </lineage>
</organism>
<accession>Q5WB79</accession>
<evidence type="ECO:0000255" key="1">
    <source>
        <dbReference type="HAMAP-Rule" id="MF_00530"/>
    </source>
</evidence>
<evidence type="ECO:0000256" key="2">
    <source>
        <dbReference type="SAM" id="MobiDB-lite"/>
    </source>
</evidence>
<proteinExistence type="inferred from homology"/>
<reference key="1">
    <citation type="submission" date="2003-10" db="EMBL/GenBank/DDBJ databases">
        <title>The complete genome sequence of the alkaliphilic Bacillus clausii KSM-K16.</title>
        <authorList>
            <person name="Takaki Y."/>
            <person name="Kageyama Y."/>
            <person name="Shimamura S."/>
            <person name="Suzuki H."/>
            <person name="Nishi S."/>
            <person name="Hatada Y."/>
            <person name="Kawai S."/>
            <person name="Ito S."/>
            <person name="Horikoshi K."/>
        </authorList>
    </citation>
    <scope>NUCLEOTIDE SEQUENCE [LARGE SCALE GENOMIC DNA]</scope>
    <source>
        <strain>KSM-K16</strain>
    </source>
</reference>
<name>ATPE_SHOC1</name>
<feature type="chain" id="PRO_0000188099" description="ATP synthase epsilon chain">
    <location>
        <begin position="1"/>
        <end position="133"/>
    </location>
</feature>
<feature type="region of interest" description="Disordered" evidence="2">
    <location>
        <begin position="81"/>
        <end position="110"/>
    </location>
</feature>
<protein>
    <recommendedName>
        <fullName evidence="1">ATP synthase epsilon chain</fullName>
    </recommendedName>
    <alternativeName>
        <fullName evidence="1">ATP synthase F1 sector epsilon subunit</fullName>
    </alternativeName>
    <alternativeName>
        <fullName evidence="1">F-ATPase epsilon subunit</fullName>
    </alternativeName>
</protein>
<sequence length="133" mass="14456">MATIQVSVITPDGAVYEGDAELVVVKTVEGELGIKAKHIPLVSPLAVGPARFIKEGKEEQVAVSSGFVEVRPDHVSILAEAAERPEQIDTERARKAKERAEQRLASEHVDRKRAEAALQRAITRMDVAKHKGA</sequence>